<accession>C3LRQ9</accession>
<comment type="function">
    <text evidence="1">Involved in the binding of tRNA to the ribosomes.</text>
</comment>
<comment type="subunit">
    <text evidence="1">Part of the 30S ribosomal subunit.</text>
</comment>
<comment type="similarity">
    <text evidence="1">Belongs to the universal ribosomal protein uS10 family.</text>
</comment>
<protein>
    <recommendedName>
        <fullName evidence="1">Small ribosomal subunit protein uS10</fullName>
    </recommendedName>
    <alternativeName>
        <fullName evidence="2">30S ribosomal protein S10</fullName>
    </alternativeName>
</protein>
<name>RS10_VIBCM</name>
<sequence length="103" mass="11708">MQNQRIRIRLKAFDYKLIDASTAEIVETAKRTGAQVRGPIPLPTRKERFTVLISPHVNKDARDQYEIRTHKRLIDIVEPTDKTVDALMRLDLAAGVDVQISLG</sequence>
<gene>
    <name evidence="1" type="primary">rpsJ</name>
    <name type="ordered locus">VCM66_2517</name>
</gene>
<evidence type="ECO:0000255" key="1">
    <source>
        <dbReference type="HAMAP-Rule" id="MF_00508"/>
    </source>
</evidence>
<evidence type="ECO:0000305" key="2"/>
<proteinExistence type="inferred from homology"/>
<organism>
    <name type="scientific">Vibrio cholerae serotype O1 (strain M66-2)</name>
    <dbReference type="NCBI Taxonomy" id="579112"/>
    <lineage>
        <taxon>Bacteria</taxon>
        <taxon>Pseudomonadati</taxon>
        <taxon>Pseudomonadota</taxon>
        <taxon>Gammaproteobacteria</taxon>
        <taxon>Vibrionales</taxon>
        <taxon>Vibrionaceae</taxon>
        <taxon>Vibrio</taxon>
    </lineage>
</organism>
<reference key="1">
    <citation type="journal article" date="2008" name="PLoS ONE">
        <title>A recalibrated molecular clock and independent origins for the cholera pandemic clones.</title>
        <authorList>
            <person name="Feng L."/>
            <person name="Reeves P.R."/>
            <person name="Lan R."/>
            <person name="Ren Y."/>
            <person name="Gao C."/>
            <person name="Zhou Z."/>
            <person name="Ren Y."/>
            <person name="Cheng J."/>
            <person name="Wang W."/>
            <person name="Wang J."/>
            <person name="Qian W."/>
            <person name="Li D."/>
            <person name="Wang L."/>
        </authorList>
    </citation>
    <scope>NUCLEOTIDE SEQUENCE [LARGE SCALE GENOMIC DNA]</scope>
    <source>
        <strain>M66-2</strain>
    </source>
</reference>
<keyword id="KW-0687">Ribonucleoprotein</keyword>
<keyword id="KW-0689">Ribosomal protein</keyword>
<feature type="chain" id="PRO_1000146087" description="Small ribosomal subunit protein uS10">
    <location>
        <begin position="1"/>
        <end position="103"/>
    </location>
</feature>
<dbReference type="EMBL" id="CP001233">
    <property type="protein sequence ID" value="ACP06814.1"/>
    <property type="molecule type" value="Genomic_DNA"/>
</dbReference>
<dbReference type="RefSeq" id="WP_001181007.1">
    <property type="nucleotide sequence ID" value="NC_012578.1"/>
</dbReference>
<dbReference type="SMR" id="C3LRQ9"/>
<dbReference type="GeneID" id="97539797"/>
<dbReference type="KEGG" id="vcm:VCM66_2517"/>
<dbReference type="HOGENOM" id="CLU_122625_1_3_6"/>
<dbReference type="Proteomes" id="UP000001217">
    <property type="component" value="Chromosome I"/>
</dbReference>
<dbReference type="GO" id="GO:1990904">
    <property type="term" value="C:ribonucleoprotein complex"/>
    <property type="evidence" value="ECO:0007669"/>
    <property type="project" value="UniProtKB-KW"/>
</dbReference>
<dbReference type="GO" id="GO:0005840">
    <property type="term" value="C:ribosome"/>
    <property type="evidence" value="ECO:0007669"/>
    <property type="project" value="UniProtKB-KW"/>
</dbReference>
<dbReference type="GO" id="GO:0003735">
    <property type="term" value="F:structural constituent of ribosome"/>
    <property type="evidence" value="ECO:0007669"/>
    <property type="project" value="InterPro"/>
</dbReference>
<dbReference type="GO" id="GO:0000049">
    <property type="term" value="F:tRNA binding"/>
    <property type="evidence" value="ECO:0007669"/>
    <property type="project" value="UniProtKB-UniRule"/>
</dbReference>
<dbReference type="GO" id="GO:0006412">
    <property type="term" value="P:translation"/>
    <property type="evidence" value="ECO:0007669"/>
    <property type="project" value="UniProtKB-UniRule"/>
</dbReference>
<dbReference type="FunFam" id="3.30.70.600:FF:000001">
    <property type="entry name" value="30S ribosomal protein S10"/>
    <property type="match status" value="1"/>
</dbReference>
<dbReference type="Gene3D" id="3.30.70.600">
    <property type="entry name" value="Ribosomal protein S10 domain"/>
    <property type="match status" value="1"/>
</dbReference>
<dbReference type="HAMAP" id="MF_00508">
    <property type="entry name" value="Ribosomal_uS10"/>
    <property type="match status" value="1"/>
</dbReference>
<dbReference type="InterPro" id="IPR001848">
    <property type="entry name" value="Ribosomal_uS10"/>
</dbReference>
<dbReference type="InterPro" id="IPR018268">
    <property type="entry name" value="Ribosomal_uS10_CS"/>
</dbReference>
<dbReference type="InterPro" id="IPR027486">
    <property type="entry name" value="Ribosomal_uS10_dom"/>
</dbReference>
<dbReference type="InterPro" id="IPR036838">
    <property type="entry name" value="Ribosomal_uS10_dom_sf"/>
</dbReference>
<dbReference type="NCBIfam" id="NF001861">
    <property type="entry name" value="PRK00596.1"/>
    <property type="match status" value="1"/>
</dbReference>
<dbReference type="NCBIfam" id="TIGR01049">
    <property type="entry name" value="rpsJ_bact"/>
    <property type="match status" value="1"/>
</dbReference>
<dbReference type="PANTHER" id="PTHR11700">
    <property type="entry name" value="30S RIBOSOMAL PROTEIN S10 FAMILY MEMBER"/>
    <property type="match status" value="1"/>
</dbReference>
<dbReference type="Pfam" id="PF00338">
    <property type="entry name" value="Ribosomal_S10"/>
    <property type="match status" value="1"/>
</dbReference>
<dbReference type="PRINTS" id="PR00971">
    <property type="entry name" value="RIBOSOMALS10"/>
</dbReference>
<dbReference type="SMART" id="SM01403">
    <property type="entry name" value="Ribosomal_S10"/>
    <property type="match status" value="1"/>
</dbReference>
<dbReference type="SUPFAM" id="SSF54999">
    <property type="entry name" value="Ribosomal protein S10"/>
    <property type="match status" value="1"/>
</dbReference>
<dbReference type="PROSITE" id="PS00361">
    <property type="entry name" value="RIBOSOMAL_S10"/>
    <property type="match status" value="1"/>
</dbReference>